<accession>Q3B6R6</accession>
<reference key="1">
    <citation type="submission" date="2005-08" db="EMBL/GenBank/DDBJ databases">
        <title>Complete sequence of Pelodictyon luteolum DSM 273.</title>
        <authorList>
            <consortium name="US DOE Joint Genome Institute"/>
            <person name="Copeland A."/>
            <person name="Lucas S."/>
            <person name="Lapidus A."/>
            <person name="Barry K."/>
            <person name="Detter J.C."/>
            <person name="Glavina T."/>
            <person name="Hammon N."/>
            <person name="Israni S."/>
            <person name="Pitluck S."/>
            <person name="Bryant D."/>
            <person name="Schmutz J."/>
            <person name="Larimer F."/>
            <person name="Land M."/>
            <person name="Kyrpides N."/>
            <person name="Ivanova N."/>
            <person name="Richardson P."/>
        </authorList>
    </citation>
    <scope>NUCLEOTIDE SEQUENCE [LARGE SCALE GENOMIC DNA]</scope>
    <source>
        <strain>DSM 273 / BCRC 81028 / 2530</strain>
    </source>
</reference>
<organism>
    <name type="scientific">Chlorobium luteolum (strain DSM 273 / BCRC 81028 / 2530)</name>
    <name type="common">Pelodictyon luteolum</name>
    <dbReference type="NCBI Taxonomy" id="319225"/>
    <lineage>
        <taxon>Bacteria</taxon>
        <taxon>Pseudomonadati</taxon>
        <taxon>Chlorobiota</taxon>
        <taxon>Chlorobiia</taxon>
        <taxon>Chlorobiales</taxon>
        <taxon>Chlorobiaceae</taxon>
        <taxon>Chlorobium/Pelodictyon group</taxon>
        <taxon>Pelodictyon</taxon>
    </lineage>
</organism>
<gene>
    <name evidence="1" type="primary">prfA</name>
    <name type="ordered locus">Plut_0075</name>
</gene>
<proteinExistence type="inferred from homology"/>
<evidence type="ECO:0000255" key="1">
    <source>
        <dbReference type="HAMAP-Rule" id="MF_00093"/>
    </source>
</evidence>
<name>RF1_CHLL3</name>
<feature type="chain" id="PRO_0000263312" description="Peptide chain release factor 1">
    <location>
        <begin position="1"/>
        <end position="358"/>
    </location>
</feature>
<feature type="modified residue" description="N5-methylglutamine" evidence="1">
    <location>
        <position position="234"/>
    </location>
</feature>
<keyword id="KW-0963">Cytoplasm</keyword>
<keyword id="KW-0488">Methylation</keyword>
<keyword id="KW-0648">Protein biosynthesis</keyword>
<keyword id="KW-1185">Reference proteome</keyword>
<comment type="function">
    <text evidence="1">Peptide chain release factor 1 directs the termination of translation in response to the peptide chain termination codons UAG and UAA.</text>
</comment>
<comment type="subcellular location">
    <subcellularLocation>
        <location evidence="1">Cytoplasm</location>
    </subcellularLocation>
</comment>
<comment type="PTM">
    <text evidence="1">Methylated by PrmC. Methylation increases the termination efficiency of RF1.</text>
</comment>
<comment type="similarity">
    <text evidence="1">Belongs to the prokaryotic/mitochondrial release factor family.</text>
</comment>
<protein>
    <recommendedName>
        <fullName evidence="1">Peptide chain release factor 1</fullName>
        <shortName evidence="1">RF-1</shortName>
    </recommendedName>
</protein>
<dbReference type="EMBL" id="CP000096">
    <property type="protein sequence ID" value="ABB22965.1"/>
    <property type="molecule type" value="Genomic_DNA"/>
</dbReference>
<dbReference type="RefSeq" id="WP_011356841.1">
    <property type="nucleotide sequence ID" value="NC_007512.1"/>
</dbReference>
<dbReference type="SMR" id="Q3B6R6"/>
<dbReference type="STRING" id="319225.Plut_0075"/>
<dbReference type="KEGG" id="plt:Plut_0075"/>
<dbReference type="eggNOG" id="COG0216">
    <property type="taxonomic scope" value="Bacteria"/>
</dbReference>
<dbReference type="HOGENOM" id="CLU_036856_0_1_10"/>
<dbReference type="OrthoDB" id="9806673at2"/>
<dbReference type="Proteomes" id="UP000002709">
    <property type="component" value="Chromosome"/>
</dbReference>
<dbReference type="GO" id="GO:0005737">
    <property type="term" value="C:cytoplasm"/>
    <property type="evidence" value="ECO:0007669"/>
    <property type="project" value="UniProtKB-SubCell"/>
</dbReference>
<dbReference type="GO" id="GO:0016149">
    <property type="term" value="F:translation release factor activity, codon specific"/>
    <property type="evidence" value="ECO:0007669"/>
    <property type="project" value="UniProtKB-UniRule"/>
</dbReference>
<dbReference type="FunFam" id="3.30.160.20:FF:000004">
    <property type="entry name" value="Peptide chain release factor 1"/>
    <property type="match status" value="1"/>
</dbReference>
<dbReference type="FunFam" id="3.30.70.1660:FF:000002">
    <property type="entry name" value="Peptide chain release factor 1"/>
    <property type="match status" value="1"/>
</dbReference>
<dbReference type="Gene3D" id="3.30.160.20">
    <property type="match status" value="1"/>
</dbReference>
<dbReference type="Gene3D" id="3.30.70.1660">
    <property type="match status" value="1"/>
</dbReference>
<dbReference type="Gene3D" id="6.10.140.1950">
    <property type="match status" value="1"/>
</dbReference>
<dbReference type="HAMAP" id="MF_00093">
    <property type="entry name" value="Rel_fac_1"/>
    <property type="match status" value="1"/>
</dbReference>
<dbReference type="InterPro" id="IPR005139">
    <property type="entry name" value="PCRF"/>
</dbReference>
<dbReference type="InterPro" id="IPR000352">
    <property type="entry name" value="Pep_chain_release_fac_I"/>
</dbReference>
<dbReference type="InterPro" id="IPR045853">
    <property type="entry name" value="Pep_chain_release_fac_I_sf"/>
</dbReference>
<dbReference type="InterPro" id="IPR050057">
    <property type="entry name" value="Prokaryotic/Mito_RF"/>
</dbReference>
<dbReference type="InterPro" id="IPR004373">
    <property type="entry name" value="RF-1"/>
</dbReference>
<dbReference type="NCBIfam" id="TIGR00019">
    <property type="entry name" value="prfA"/>
    <property type="match status" value="1"/>
</dbReference>
<dbReference type="NCBIfam" id="NF001859">
    <property type="entry name" value="PRK00591.1"/>
    <property type="match status" value="1"/>
</dbReference>
<dbReference type="PANTHER" id="PTHR43804">
    <property type="entry name" value="LD18447P"/>
    <property type="match status" value="1"/>
</dbReference>
<dbReference type="PANTHER" id="PTHR43804:SF7">
    <property type="entry name" value="LD18447P"/>
    <property type="match status" value="1"/>
</dbReference>
<dbReference type="Pfam" id="PF03462">
    <property type="entry name" value="PCRF"/>
    <property type="match status" value="1"/>
</dbReference>
<dbReference type="Pfam" id="PF00472">
    <property type="entry name" value="RF-1"/>
    <property type="match status" value="1"/>
</dbReference>
<dbReference type="SMART" id="SM00937">
    <property type="entry name" value="PCRF"/>
    <property type="match status" value="1"/>
</dbReference>
<dbReference type="SUPFAM" id="SSF75620">
    <property type="entry name" value="Release factor"/>
    <property type="match status" value="1"/>
</dbReference>
<dbReference type="PROSITE" id="PS00745">
    <property type="entry name" value="RF_PROK_I"/>
    <property type="match status" value="1"/>
</dbReference>
<sequence>MFDKLQSIKERHLDLERMLADPAAAGDQTRFRRLNKEYSDLKEIVQAYDRYASARQQLEESRHMQKAEEDPEMKAMAREEMLELEERIPGLEQELRILLLPKDEADSRNVIMEIRAGTGGEEAALFAADLMRMYQRYAERQGWRCEVLDYNESSGPGGFREVTLTISGHDVYGTLKYESGVHRVQRVPETETQGRIHTSAASVAVLPEAEEVDVEIRRDDLRFDTYRSGGKGGQNVNKVETAVRITHEPTGLVAACQEERSQLQNKERAMKMLMAKLYDIKLQEQQQERADMRRTMVASGDRSAKIRTYNYPQSRVTDHRIGFTSHGLPHFMQGEIGELIDALKMHDQTERLQEAARA</sequence>